<protein>
    <recommendedName>
        <fullName evidence="1">Holliday junction branch migration complex subunit RuvB</fullName>
        <ecNumber evidence="1">3.6.4.-</ecNumber>
    </recommendedName>
</protein>
<evidence type="ECO:0000255" key="1">
    <source>
        <dbReference type="HAMAP-Rule" id="MF_00016"/>
    </source>
</evidence>
<evidence type="ECO:0000269" key="2">
    <source>
    </source>
</evidence>
<comment type="function">
    <text evidence="1">The RuvA-RuvB-RuvC complex processes Holliday junction (HJ) DNA during genetic recombination and DNA repair, while the RuvA-RuvB complex plays an important role in the rescue of blocked DNA replication forks via replication fork reversal (RFR). RuvA specifically binds to HJ cruciform DNA, conferring on it an open structure. The RuvB hexamer acts as an ATP-dependent pump, pulling dsDNA into and through the RuvAB complex. RuvB forms 2 homohexamers on either side of HJ DNA bound by 1 or 2 RuvA tetramers; 4 subunits per hexamer contact DNA at a time. Coordinated motions by a converter formed by DNA-disengaged RuvB subunits stimulates ATP hydrolysis and nucleotide exchange. Immobilization of the converter enables RuvB to convert the ATP-contained energy into a lever motion, pulling 2 nucleotides of DNA out of the RuvA tetramer per ATP hydrolyzed, thus driving DNA branch migration. The RuvB motors rotate together with the DNA substrate, which together with the progressing nucleotide cycle form the mechanistic basis for DNA recombination by continuous HJ branch migration. Branch migration allows RuvC to scan DNA until it finds its consensus sequence, where it cleaves and resolves cruciform DNA.</text>
</comment>
<comment type="function">
    <text evidence="2">Plays a role in recovery after DNA ADP-ribosylation, probably via replication fork reversal.</text>
</comment>
<comment type="catalytic activity">
    <reaction evidence="1">
        <text>ATP + H2O = ADP + phosphate + H(+)</text>
        <dbReference type="Rhea" id="RHEA:13065"/>
        <dbReference type="ChEBI" id="CHEBI:15377"/>
        <dbReference type="ChEBI" id="CHEBI:15378"/>
        <dbReference type="ChEBI" id="CHEBI:30616"/>
        <dbReference type="ChEBI" id="CHEBI:43474"/>
        <dbReference type="ChEBI" id="CHEBI:456216"/>
    </reaction>
</comment>
<comment type="subunit">
    <text evidence="1">Homohexamer. Forms an RuvA(8)-RuvB(12)-Holliday junction (HJ) complex. HJ DNA is sandwiched between 2 RuvA tetramers; dsDNA enters through RuvA and exits via RuvB. An RuvB hexamer assembles on each DNA strand where it exits the tetramer. Each RuvB hexamer is contacted by two RuvA subunits (via domain III) on 2 adjacent RuvB subunits; this complex drives branch migration. In the full resolvosome a probable DNA-RuvA(4)-RuvB(12)-RuvC(2) complex forms which resolves the HJ.</text>
</comment>
<comment type="subcellular location">
    <subcellularLocation>
        <location evidence="1">Cytoplasm</location>
    </subcellularLocation>
</comment>
<comment type="domain">
    <text evidence="1">Has 3 domains, the large (RuvB-L) and small ATPase (RuvB-S) domains and the C-terminal head (RuvB-H) domain. The head domain binds DNA, while the ATPase domains jointly bind ATP, ADP or are empty depending on the state of the subunit in the translocation cycle. During a single DNA translocation step the structure of each domain remains the same, but their relative positions change.</text>
</comment>
<comment type="disruption phenotype">
    <text evidence="2">Significantly reduced survival of cells expressing DNA ADP-ribosyl transferase (darT) mutant G49D.</text>
</comment>
<comment type="similarity">
    <text evidence="1">Belongs to the RuvB family.</text>
</comment>
<name>RUVB_ECO27</name>
<feature type="chain" id="PRO_1000116641" description="Holliday junction branch migration complex subunit RuvB">
    <location>
        <begin position="1"/>
        <end position="336"/>
    </location>
</feature>
<feature type="region of interest" description="Large ATPase domain (RuvB-L)" evidence="1">
    <location>
        <begin position="4"/>
        <end position="184"/>
    </location>
</feature>
<feature type="region of interest" description="Small ATPAse domain (RuvB-S)" evidence="1">
    <location>
        <begin position="185"/>
        <end position="255"/>
    </location>
</feature>
<feature type="region of interest" description="Head domain (RuvB-H)" evidence="1">
    <location>
        <begin position="258"/>
        <end position="336"/>
    </location>
</feature>
<feature type="binding site" evidence="1">
    <location>
        <position position="23"/>
    </location>
    <ligand>
        <name>ATP</name>
        <dbReference type="ChEBI" id="CHEBI:30616"/>
    </ligand>
</feature>
<feature type="binding site" evidence="1">
    <location>
        <position position="24"/>
    </location>
    <ligand>
        <name>ATP</name>
        <dbReference type="ChEBI" id="CHEBI:30616"/>
    </ligand>
</feature>
<feature type="binding site" evidence="1">
    <location>
        <position position="65"/>
    </location>
    <ligand>
        <name>ATP</name>
        <dbReference type="ChEBI" id="CHEBI:30616"/>
    </ligand>
</feature>
<feature type="binding site" evidence="1">
    <location>
        <position position="68"/>
    </location>
    <ligand>
        <name>ATP</name>
        <dbReference type="ChEBI" id="CHEBI:30616"/>
    </ligand>
</feature>
<feature type="binding site" evidence="1">
    <location>
        <position position="69"/>
    </location>
    <ligand>
        <name>ATP</name>
        <dbReference type="ChEBI" id="CHEBI:30616"/>
    </ligand>
</feature>
<feature type="binding site" evidence="1">
    <location>
        <position position="69"/>
    </location>
    <ligand>
        <name>Mg(2+)</name>
        <dbReference type="ChEBI" id="CHEBI:18420"/>
    </ligand>
</feature>
<feature type="binding site" evidence="1">
    <location>
        <position position="70"/>
    </location>
    <ligand>
        <name>ATP</name>
        <dbReference type="ChEBI" id="CHEBI:30616"/>
    </ligand>
</feature>
<feature type="binding site" evidence="1">
    <location>
        <begin position="131"/>
        <end position="133"/>
    </location>
    <ligand>
        <name>ATP</name>
        <dbReference type="ChEBI" id="CHEBI:30616"/>
    </ligand>
</feature>
<feature type="binding site" evidence="1">
    <location>
        <position position="174"/>
    </location>
    <ligand>
        <name>ATP</name>
        <dbReference type="ChEBI" id="CHEBI:30616"/>
    </ligand>
</feature>
<feature type="binding site" evidence="1">
    <location>
        <position position="184"/>
    </location>
    <ligand>
        <name>ATP</name>
        <dbReference type="ChEBI" id="CHEBI:30616"/>
    </ligand>
</feature>
<feature type="binding site" evidence="1">
    <location>
        <position position="221"/>
    </location>
    <ligand>
        <name>ATP</name>
        <dbReference type="ChEBI" id="CHEBI:30616"/>
    </ligand>
</feature>
<feature type="binding site" evidence="1">
    <location>
        <position position="294"/>
    </location>
    <ligand>
        <name>DNA</name>
        <dbReference type="ChEBI" id="CHEBI:16991"/>
    </ligand>
</feature>
<feature type="binding site" evidence="1">
    <location>
        <position position="313"/>
    </location>
    <ligand>
        <name>DNA</name>
        <dbReference type="ChEBI" id="CHEBI:16991"/>
    </ligand>
</feature>
<feature type="binding site" evidence="1">
    <location>
        <position position="318"/>
    </location>
    <ligand>
        <name>DNA</name>
        <dbReference type="ChEBI" id="CHEBI:16991"/>
    </ligand>
</feature>
<dbReference type="EC" id="3.6.4.-" evidence="1"/>
<dbReference type="EMBL" id="FM180568">
    <property type="protein sequence ID" value="CAS09533.1"/>
    <property type="molecule type" value="Genomic_DNA"/>
</dbReference>
<dbReference type="RefSeq" id="WP_000568522.1">
    <property type="nucleotide sequence ID" value="NC_011601.1"/>
</dbReference>
<dbReference type="SMR" id="B7USN7"/>
<dbReference type="GeneID" id="86860002"/>
<dbReference type="KEGG" id="ecg:E2348C_1985"/>
<dbReference type="HOGENOM" id="CLU_055599_1_0_6"/>
<dbReference type="Proteomes" id="UP000008205">
    <property type="component" value="Chromosome"/>
</dbReference>
<dbReference type="GO" id="GO:0005737">
    <property type="term" value="C:cytoplasm"/>
    <property type="evidence" value="ECO:0007669"/>
    <property type="project" value="UniProtKB-SubCell"/>
</dbReference>
<dbReference type="GO" id="GO:0048476">
    <property type="term" value="C:Holliday junction resolvase complex"/>
    <property type="evidence" value="ECO:0007669"/>
    <property type="project" value="UniProtKB-UniRule"/>
</dbReference>
<dbReference type="GO" id="GO:0005524">
    <property type="term" value="F:ATP binding"/>
    <property type="evidence" value="ECO:0007669"/>
    <property type="project" value="UniProtKB-UniRule"/>
</dbReference>
<dbReference type="GO" id="GO:0016887">
    <property type="term" value="F:ATP hydrolysis activity"/>
    <property type="evidence" value="ECO:0007669"/>
    <property type="project" value="InterPro"/>
</dbReference>
<dbReference type="GO" id="GO:0000400">
    <property type="term" value="F:four-way junction DNA binding"/>
    <property type="evidence" value="ECO:0007669"/>
    <property type="project" value="UniProtKB-UniRule"/>
</dbReference>
<dbReference type="GO" id="GO:0009378">
    <property type="term" value="F:four-way junction helicase activity"/>
    <property type="evidence" value="ECO:0007669"/>
    <property type="project" value="InterPro"/>
</dbReference>
<dbReference type="GO" id="GO:0006310">
    <property type="term" value="P:DNA recombination"/>
    <property type="evidence" value="ECO:0007669"/>
    <property type="project" value="UniProtKB-UniRule"/>
</dbReference>
<dbReference type="GO" id="GO:0006281">
    <property type="term" value="P:DNA repair"/>
    <property type="evidence" value="ECO:0007669"/>
    <property type="project" value="UniProtKB-UniRule"/>
</dbReference>
<dbReference type="GO" id="GO:0009432">
    <property type="term" value="P:SOS response"/>
    <property type="evidence" value="ECO:0007669"/>
    <property type="project" value="UniProtKB-UniRule"/>
</dbReference>
<dbReference type="CDD" id="cd00009">
    <property type="entry name" value="AAA"/>
    <property type="match status" value="1"/>
</dbReference>
<dbReference type="FunFam" id="1.10.10.10:FF:000086">
    <property type="entry name" value="Holliday junction ATP-dependent DNA helicase RuvB"/>
    <property type="match status" value="1"/>
</dbReference>
<dbReference type="FunFam" id="1.10.8.60:FF:000023">
    <property type="entry name" value="Holliday junction ATP-dependent DNA helicase RuvB"/>
    <property type="match status" value="1"/>
</dbReference>
<dbReference type="FunFam" id="3.40.50.300:FF:000073">
    <property type="entry name" value="Holliday junction ATP-dependent DNA helicase RuvB"/>
    <property type="match status" value="1"/>
</dbReference>
<dbReference type="Gene3D" id="1.10.8.60">
    <property type="match status" value="1"/>
</dbReference>
<dbReference type="Gene3D" id="3.40.50.300">
    <property type="entry name" value="P-loop containing nucleotide triphosphate hydrolases"/>
    <property type="match status" value="1"/>
</dbReference>
<dbReference type="Gene3D" id="1.10.10.10">
    <property type="entry name" value="Winged helix-like DNA-binding domain superfamily/Winged helix DNA-binding domain"/>
    <property type="match status" value="1"/>
</dbReference>
<dbReference type="HAMAP" id="MF_00016">
    <property type="entry name" value="DNA_HJ_migration_RuvB"/>
    <property type="match status" value="1"/>
</dbReference>
<dbReference type="InterPro" id="IPR003593">
    <property type="entry name" value="AAA+_ATPase"/>
</dbReference>
<dbReference type="InterPro" id="IPR041445">
    <property type="entry name" value="AAA_lid_4"/>
</dbReference>
<dbReference type="InterPro" id="IPR004605">
    <property type="entry name" value="DNA_helicase_Holl-junc_RuvB"/>
</dbReference>
<dbReference type="InterPro" id="IPR027417">
    <property type="entry name" value="P-loop_NTPase"/>
</dbReference>
<dbReference type="InterPro" id="IPR008824">
    <property type="entry name" value="RuvB-like_N"/>
</dbReference>
<dbReference type="InterPro" id="IPR008823">
    <property type="entry name" value="RuvB_C"/>
</dbReference>
<dbReference type="InterPro" id="IPR036388">
    <property type="entry name" value="WH-like_DNA-bd_sf"/>
</dbReference>
<dbReference type="InterPro" id="IPR036390">
    <property type="entry name" value="WH_DNA-bd_sf"/>
</dbReference>
<dbReference type="NCBIfam" id="NF000868">
    <property type="entry name" value="PRK00080.1"/>
    <property type="match status" value="1"/>
</dbReference>
<dbReference type="NCBIfam" id="TIGR00635">
    <property type="entry name" value="ruvB"/>
    <property type="match status" value="1"/>
</dbReference>
<dbReference type="PANTHER" id="PTHR42848">
    <property type="match status" value="1"/>
</dbReference>
<dbReference type="PANTHER" id="PTHR42848:SF1">
    <property type="entry name" value="HOLLIDAY JUNCTION BRANCH MIGRATION COMPLEX SUBUNIT RUVB"/>
    <property type="match status" value="1"/>
</dbReference>
<dbReference type="Pfam" id="PF17864">
    <property type="entry name" value="AAA_lid_4"/>
    <property type="match status" value="1"/>
</dbReference>
<dbReference type="Pfam" id="PF05491">
    <property type="entry name" value="RuvB_C"/>
    <property type="match status" value="1"/>
</dbReference>
<dbReference type="Pfam" id="PF05496">
    <property type="entry name" value="RuvB_N"/>
    <property type="match status" value="1"/>
</dbReference>
<dbReference type="SMART" id="SM00382">
    <property type="entry name" value="AAA"/>
    <property type="match status" value="1"/>
</dbReference>
<dbReference type="SUPFAM" id="SSF52540">
    <property type="entry name" value="P-loop containing nucleoside triphosphate hydrolases"/>
    <property type="match status" value="1"/>
</dbReference>
<dbReference type="SUPFAM" id="SSF46785">
    <property type="entry name" value="Winged helix' DNA-binding domain"/>
    <property type="match status" value="1"/>
</dbReference>
<gene>
    <name evidence="1" type="primary">ruvB</name>
    <name type="ordered locus">E2348C_1985</name>
</gene>
<organism>
    <name type="scientific">Escherichia coli O127:H6 (strain E2348/69 / EPEC)</name>
    <dbReference type="NCBI Taxonomy" id="574521"/>
    <lineage>
        <taxon>Bacteria</taxon>
        <taxon>Pseudomonadati</taxon>
        <taxon>Pseudomonadota</taxon>
        <taxon>Gammaproteobacteria</taxon>
        <taxon>Enterobacterales</taxon>
        <taxon>Enterobacteriaceae</taxon>
        <taxon>Escherichia</taxon>
    </lineage>
</organism>
<sequence>MIEADRLISAGTTLPEDVADRAIRPKLLEEYVGQPQVRSQMEIFIKAAKLRGDALDHLLIFGPPGLGKTTLANIVANEMGVNLRTTSGPVLEKAGDLAAMLTNLEPHDVLFIDEIHRLSPVVEEVLYPAMEDYQLDIMIGEGPAARSIKIDLPPFTLIGATTRAGSLTSPLRDRFGIVQRLEFYQVPDLQYIVSRSARFMGLEMSDDGALEVARRARGTPRIANRLLRRVRDFAEVKHDGTISADIAAQALDMLNVDAEGFDYMDRKLLLAVIDKFFGGPVGLDNLAAAIGEERETIEDVLEPYLIQQGFLQRTPRGRMATVRAWNHFGITPPEMP</sequence>
<keyword id="KW-0067">ATP-binding</keyword>
<keyword id="KW-0963">Cytoplasm</keyword>
<keyword id="KW-0227">DNA damage</keyword>
<keyword id="KW-0233">DNA recombination</keyword>
<keyword id="KW-0234">DNA repair</keyword>
<keyword id="KW-0238">DNA-binding</keyword>
<keyword id="KW-0378">Hydrolase</keyword>
<keyword id="KW-0547">Nucleotide-binding</keyword>
<keyword id="KW-1185">Reference proteome</keyword>
<keyword id="KW-0742">SOS response</keyword>
<reference key="1">
    <citation type="journal article" date="2009" name="J. Bacteriol.">
        <title>Complete genome sequence and comparative genome analysis of enteropathogenic Escherichia coli O127:H6 strain E2348/69.</title>
        <authorList>
            <person name="Iguchi A."/>
            <person name="Thomson N.R."/>
            <person name="Ogura Y."/>
            <person name="Saunders D."/>
            <person name="Ooka T."/>
            <person name="Henderson I.R."/>
            <person name="Harris D."/>
            <person name="Asadulghani M."/>
            <person name="Kurokawa K."/>
            <person name="Dean P."/>
            <person name="Kenny B."/>
            <person name="Quail M.A."/>
            <person name="Thurston S."/>
            <person name="Dougan G."/>
            <person name="Hayashi T."/>
            <person name="Parkhill J."/>
            <person name="Frankel G."/>
        </authorList>
    </citation>
    <scope>NUCLEOTIDE SEQUENCE [LARGE SCALE GENOMIC DNA]</scope>
    <source>
        <strain>E2348/69 / EPEC</strain>
    </source>
</reference>
<reference key="2">
    <citation type="journal article" date="2020" name="Cell Rep.">
        <title>DNA ADP-Ribosylation Stalls Replication and Is Reversed by RecF-Mediated Homologous Recombination and Nucleotide Excision Repair.</title>
        <authorList>
            <person name="Lawaree E."/>
            <person name="Jankevicius G."/>
            <person name="Cooper C."/>
            <person name="Ahel I."/>
            <person name="Uphoff S."/>
            <person name="Tang C.M."/>
        </authorList>
    </citation>
    <scope>FUNCTION</scope>
    <scope>DISRUPTION PHENOTYPE</scope>
    <source>
        <strain>E2348/69 / EPEC</strain>
    </source>
</reference>
<proteinExistence type="inferred from homology"/>
<accession>B7USN7</accession>